<keyword id="KW-0002">3D-structure</keyword>
<keyword id="KW-0378">Hydrolase</keyword>
<keyword id="KW-0511">Multifunctional enzyme</keyword>
<keyword id="KW-0658">Purine biosynthesis</keyword>
<keyword id="KW-1185">Reference proteome</keyword>
<keyword id="KW-0808">Transferase</keyword>
<name>PUR9_THEMA</name>
<feature type="chain" id="PRO_0000192142" description="Bifunctional purine biosynthesis protein PurH">
    <location>
        <begin position="1"/>
        <end position="452"/>
    </location>
</feature>
<feature type="domain" description="MGS-like" evidence="2">
    <location>
        <begin position="1"/>
        <end position="115"/>
    </location>
</feature>
<feature type="strand" evidence="4">
    <location>
        <begin position="3"/>
        <end position="7"/>
    </location>
</feature>
<feature type="helix" evidence="4">
    <location>
        <begin position="12"/>
        <end position="14"/>
    </location>
</feature>
<feature type="helix" evidence="4">
    <location>
        <begin position="15"/>
        <end position="23"/>
    </location>
</feature>
<feature type="strand" evidence="4">
    <location>
        <begin position="27"/>
        <end position="30"/>
    </location>
</feature>
<feature type="helix" evidence="4">
    <location>
        <begin position="32"/>
        <end position="40"/>
    </location>
</feature>
<feature type="helix" evidence="4">
    <location>
        <begin position="48"/>
        <end position="51"/>
    </location>
</feature>
<feature type="helix" evidence="4">
    <location>
        <begin position="57"/>
        <end position="60"/>
    </location>
</feature>
<feature type="turn" evidence="4">
    <location>
        <begin position="61"/>
        <end position="64"/>
    </location>
</feature>
<feature type="helix" evidence="4">
    <location>
        <begin position="67"/>
        <end position="74"/>
    </location>
</feature>
<feature type="strand" evidence="4">
    <location>
        <begin position="75"/>
        <end position="77"/>
    </location>
</feature>
<feature type="strand" evidence="4">
    <location>
        <begin position="81"/>
        <end position="85"/>
    </location>
</feature>
<feature type="helix" evidence="4">
    <location>
        <begin position="96"/>
        <end position="106"/>
    </location>
</feature>
<feature type="turn" evidence="4">
    <location>
        <begin position="107"/>
        <end position="110"/>
    </location>
</feature>
<feature type="strand" evidence="4">
    <location>
        <begin position="112"/>
        <end position="114"/>
    </location>
</feature>
<feature type="helix" evidence="4">
    <location>
        <begin position="117"/>
        <end position="125"/>
    </location>
</feature>
<feature type="helix" evidence="4">
    <location>
        <begin position="129"/>
        <end position="154"/>
    </location>
</feature>
<feature type="strand" evidence="4">
    <location>
        <begin position="158"/>
        <end position="165"/>
    </location>
</feature>
<feature type="strand" evidence="4">
    <location>
        <begin position="172"/>
        <end position="174"/>
    </location>
</feature>
<feature type="strand" evidence="4">
    <location>
        <begin position="179"/>
        <end position="183"/>
    </location>
</feature>
<feature type="strand" evidence="4">
    <location>
        <begin position="186"/>
        <end position="190"/>
    </location>
</feature>
<feature type="strand" evidence="4">
    <location>
        <begin position="192"/>
        <end position="194"/>
    </location>
</feature>
<feature type="helix" evidence="4">
    <location>
        <begin position="198"/>
        <end position="212"/>
    </location>
</feature>
<feature type="strand" evidence="4">
    <location>
        <begin position="215"/>
        <end position="223"/>
    </location>
</feature>
<feature type="strand" evidence="4">
    <location>
        <begin position="226"/>
        <end position="232"/>
    </location>
</feature>
<feature type="helix" evidence="4">
    <location>
        <begin position="236"/>
        <end position="246"/>
    </location>
</feature>
<feature type="turn" evidence="4">
    <location>
        <begin position="247"/>
        <end position="253"/>
    </location>
</feature>
<feature type="strand" evidence="4">
    <location>
        <begin position="254"/>
        <end position="260"/>
    </location>
</feature>
<feature type="helix" evidence="4">
    <location>
        <begin position="264"/>
        <end position="269"/>
    </location>
</feature>
<feature type="strand" evidence="4">
    <location>
        <begin position="274"/>
        <end position="278"/>
    </location>
</feature>
<feature type="helix" evidence="4">
    <location>
        <begin position="284"/>
        <end position="290"/>
    </location>
</feature>
<feature type="strand" evidence="4">
    <location>
        <begin position="296"/>
        <end position="300"/>
    </location>
</feature>
<feature type="strand" evidence="4">
    <location>
        <begin position="306"/>
        <end position="311"/>
    </location>
</feature>
<feature type="strand" evidence="4">
    <location>
        <begin position="314"/>
        <end position="319"/>
    </location>
</feature>
<feature type="strand" evidence="4">
    <location>
        <begin position="328"/>
        <end position="332"/>
    </location>
</feature>
<feature type="helix" evidence="4">
    <location>
        <begin position="337"/>
        <end position="352"/>
    </location>
</feature>
<feature type="strand" evidence="4">
    <location>
        <begin position="358"/>
        <end position="362"/>
    </location>
</feature>
<feature type="strand" evidence="4">
    <location>
        <begin position="365"/>
        <end position="370"/>
    </location>
</feature>
<feature type="helix" evidence="4">
    <location>
        <begin position="376"/>
        <end position="387"/>
    </location>
</feature>
<feature type="helix" evidence="4">
    <location>
        <begin position="388"/>
        <end position="391"/>
    </location>
</feature>
<feature type="strand" evidence="4">
    <location>
        <begin position="395"/>
        <end position="400"/>
    </location>
</feature>
<feature type="helix" evidence="4">
    <location>
        <begin position="405"/>
        <end position="413"/>
    </location>
</feature>
<feature type="strand" evidence="4">
    <location>
        <begin position="418"/>
        <end position="421"/>
    </location>
</feature>
<feature type="helix" evidence="4">
    <location>
        <begin position="428"/>
        <end position="438"/>
    </location>
</feature>
<feature type="strand" evidence="4">
    <location>
        <begin position="441"/>
        <end position="444"/>
    </location>
</feature>
<evidence type="ECO:0000255" key="1">
    <source>
        <dbReference type="HAMAP-Rule" id="MF_00139"/>
    </source>
</evidence>
<evidence type="ECO:0000255" key="2">
    <source>
        <dbReference type="PROSITE-ProRule" id="PRU01202"/>
    </source>
</evidence>
<evidence type="ECO:0000305" key="3"/>
<evidence type="ECO:0007829" key="4">
    <source>
        <dbReference type="PDB" id="1ZCZ"/>
    </source>
</evidence>
<accession>Q9X0X6</accession>
<gene>
    <name evidence="1" type="primary">purH</name>
    <name type="ordered locus">TM_1249</name>
</gene>
<reference key="1">
    <citation type="journal article" date="1999" name="Nature">
        <title>Evidence for lateral gene transfer between Archaea and Bacteria from genome sequence of Thermotoga maritima.</title>
        <authorList>
            <person name="Nelson K.E."/>
            <person name="Clayton R.A."/>
            <person name="Gill S.R."/>
            <person name="Gwinn M.L."/>
            <person name="Dodson R.J."/>
            <person name="Haft D.H."/>
            <person name="Hickey E.K."/>
            <person name="Peterson J.D."/>
            <person name="Nelson W.C."/>
            <person name="Ketchum K.A."/>
            <person name="McDonald L.A."/>
            <person name="Utterback T.R."/>
            <person name="Malek J.A."/>
            <person name="Linher K.D."/>
            <person name="Garrett M.M."/>
            <person name="Stewart A.M."/>
            <person name="Cotton M.D."/>
            <person name="Pratt M.S."/>
            <person name="Phillips C.A."/>
            <person name="Richardson D.L."/>
            <person name="Heidelberg J.F."/>
            <person name="Sutton G.G."/>
            <person name="Fleischmann R.D."/>
            <person name="Eisen J.A."/>
            <person name="White O."/>
            <person name="Salzberg S.L."/>
            <person name="Smith H.O."/>
            <person name="Venter J.C."/>
            <person name="Fraser C.M."/>
        </authorList>
    </citation>
    <scope>NUCLEOTIDE SEQUENCE [LARGE SCALE GENOMIC DNA]</scope>
    <source>
        <strain>ATCC 43589 / DSM 3109 / JCM 10099 / NBRC 100826 / MSB8</strain>
    </source>
</reference>
<dbReference type="EC" id="2.1.2.3" evidence="1"/>
<dbReference type="EC" id="3.5.4.10" evidence="1"/>
<dbReference type="EMBL" id="AE000512">
    <property type="protein sequence ID" value="AAD36324.1"/>
    <property type="molecule type" value="Genomic_DNA"/>
</dbReference>
<dbReference type="PIR" id="C72277">
    <property type="entry name" value="C72277"/>
</dbReference>
<dbReference type="RefSeq" id="NP_229054.1">
    <property type="nucleotide sequence ID" value="NC_000853.1"/>
</dbReference>
<dbReference type="RefSeq" id="WP_004080014.1">
    <property type="nucleotide sequence ID" value="NZ_CP011107.1"/>
</dbReference>
<dbReference type="PDB" id="1ZCZ">
    <property type="method" value="X-ray"/>
    <property type="resolution" value="1.88 A"/>
    <property type="chains" value="A/B=1-452"/>
</dbReference>
<dbReference type="PDBsum" id="1ZCZ"/>
<dbReference type="SMR" id="Q9X0X6"/>
<dbReference type="FunCoup" id="Q9X0X6">
    <property type="interactions" value="356"/>
</dbReference>
<dbReference type="STRING" id="243274.TM_1249"/>
<dbReference type="PaxDb" id="243274-THEMA_08090"/>
<dbReference type="EnsemblBacteria" id="AAD36324">
    <property type="protein sequence ID" value="AAD36324"/>
    <property type="gene ID" value="TM_1249"/>
</dbReference>
<dbReference type="KEGG" id="tma:TM1249"/>
<dbReference type="KEGG" id="tmi:THEMA_08090"/>
<dbReference type="KEGG" id="tmm:Tmari_1254"/>
<dbReference type="KEGG" id="tmw:THMA_1274"/>
<dbReference type="eggNOG" id="COG0138">
    <property type="taxonomic scope" value="Bacteria"/>
</dbReference>
<dbReference type="InParanoid" id="Q9X0X6"/>
<dbReference type="OrthoDB" id="9802065at2"/>
<dbReference type="BRENDA" id="3.5.4.10">
    <property type="organism ID" value="6331"/>
</dbReference>
<dbReference type="UniPathway" id="UPA00074">
    <property type="reaction ID" value="UER00133"/>
</dbReference>
<dbReference type="UniPathway" id="UPA00074">
    <property type="reaction ID" value="UER00135"/>
</dbReference>
<dbReference type="EvolutionaryTrace" id="Q9X0X6"/>
<dbReference type="Proteomes" id="UP000008183">
    <property type="component" value="Chromosome"/>
</dbReference>
<dbReference type="GO" id="GO:0005829">
    <property type="term" value="C:cytosol"/>
    <property type="evidence" value="ECO:0000318"/>
    <property type="project" value="GO_Central"/>
</dbReference>
<dbReference type="GO" id="GO:0003937">
    <property type="term" value="F:IMP cyclohydrolase activity"/>
    <property type="evidence" value="ECO:0000318"/>
    <property type="project" value="GO_Central"/>
</dbReference>
<dbReference type="GO" id="GO:0004643">
    <property type="term" value="F:phosphoribosylaminoimidazolecarboxamide formyltransferase activity"/>
    <property type="evidence" value="ECO:0000318"/>
    <property type="project" value="GO_Central"/>
</dbReference>
<dbReference type="GO" id="GO:0006189">
    <property type="term" value="P:'de novo' IMP biosynthetic process"/>
    <property type="evidence" value="ECO:0000318"/>
    <property type="project" value="GO_Central"/>
</dbReference>
<dbReference type="CDD" id="cd01421">
    <property type="entry name" value="IMPCH"/>
    <property type="match status" value="1"/>
</dbReference>
<dbReference type="FunFam" id="3.40.140.20:FF:000006">
    <property type="entry name" value="Bifunctional purine biosynthesis protein PurH"/>
    <property type="match status" value="1"/>
</dbReference>
<dbReference type="FunFam" id="3.40.50.1380:FF:000023">
    <property type="entry name" value="Bifunctional purine biosynthesis protein PurH"/>
    <property type="match status" value="1"/>
</dbReference>
<dbReference type="Gene3D" id="3.40.140.20">
    <property type="match status" value="2"/>
</dbReference>
<dbReference type="Gene3D" id="3.40.50.1380">
    <property type="entry name" value="Methylglyoxal synthase-like domain"/>
    <property type="match status" value="1"/>
</dbReference>
<dbReference type="HAMAP" id="MF_00139">
    <property type="entry name" value="PurH"/>
    <property type="match status" value="1"/>
</dbReference>
<dbReference type="InterPro" id="IPR024051">
    <property type="entry name" value="AICAR_Tfase_dup_dom_sf"/>
</dbReference>
<dbReference type="InterPro" id="IPR016193">
    <property type="entry name" value="Cytidine_deaminase-like"/>
</dbReference>
<dbReference type="InterPro" id="IPR011607">
    <property type="entry name" value="MGS-like_dom"/>
</dbReference>
<dbReference type="InterPro" id="IPR036914">
    <property type="entry name" value="MGS-like_dom_sf"/>
</dbReference>
<dbReference type="InterPro" id="IPR002695">
    <property type="entry name" value="PurH-like"/>
</dbReference>
<dbReference type="PANTHER" id="PTHR11692:SF0">
    <property type="entry name" value="BIFUNCTIONAL PURINE BIOSYNTHESIS PROTEIN ATIC"/>
    <property type="match status" value="1"/>
</dbReference>
<dbReference type="PANTHER" id="PTHR11692">
    <property type="entry name" value="BIFUNCTIONAL PURINE BIOSYNTHESIS PROTEIN PURH"/>
    <property type="match status" value="1"/>
</dbReference>
<dbReference type="Pfam" id="PF01808">
    <property type="entry name" value="AICARFT_IMPCHas"/>
    <property type="match status" value="1"/>
</dbReference>
<dbReference type="Pfam" id="PF02142">
    <property type="entry name" value="MGS"/>
    <property type="match status" value="1"/>
</dbReference>
<dbReference type="PIRSF" id="PIRSF000414">
    <property type="entry name" value="AICARFT_IMPCHas"/>
    <property type="match status" value="1"/>
</dbReference>
<dbReference type="SMART" id="SM00798">
    <property type="entry name" value="AICARFT_IMPCHas"/>
    <property type="match status" value="1"/>
</dbReference>
<dbReference type="SMART" id="SM00851">
    <property type="entry name" value="MGS"/>
    <property type="match status" value="1"/>
</dbReference>
<dbReference type="SUPFAM" id="SSF53927">
    <property type="entry name" value="Cytidine deaminase-like"/>
    <property type="match status" value="1"/>
</dbReference>
<dbReference type="SUPFAM" id="SSF52335">
    <property type="entry name" value="Methylglyoxal synthase-like"/>
    <property type="match status" value="1"/>
</dbReference>
<dbReference type="PROSITE" id="PS51855">
    <property type="entry name" value="MGS"/>
    <property type="match status" value="1"/>
</dbReference>
<organism>
    <name type="scientific">Thermotoga maritima (strain ATCC 43589 / DSM 3109 / JCM 10099 / NBRC 100826 / MSB8)</name>
    <dbReference type="NCBI Taxonomy" id="243274"/>
    <lineage>
        <taxon>Bacteria</taxon>
        <taxon>Thermotogati</taxon>
        <taxon>Thermotogota</taxon>
        <taxon>Thermotogae</taxon>
        <taxon>Thermotogales</taxon>
        <taxon>Thermotogaceae</taxon>
        <taxon>Thermotoga</taxon>
    </lineage>
</organism>
<proteinExistence type="evidence at protein level"/>
<protein>
    <recommendedName>
        <fullName evidence="1">Bifunctional purine biosynthesis protein PurH</fullName>
    </recommendedName>
    <domain>
        <recommendedName>
            <fullName evidence="1">Phosphoribosylaminoimidazolecarboxamide formyltransferase</fullName>
            <ecNumber evidence="1">2.1.2.3</ecNumber>
        </recommendedName>
        <alternativeName>
            <fullName evidence="1">AICAR transformylase</fullName>
        </alternativeName>
    </domain>
    <domain>
        <recommendedName>
            <fullName evidence="1">IMP cyclohydrolase</fullName>
            <ecNumber evidence="1">3.5.4.10</ecNumber>
        </recommendedName>
        <alternativeName>
            <fullName evidence="1">ATIC</fullName>
        </alternativeName>
        <alternativeName>
            <fullName evidence="1">IMP synthase</fullName>
        </alternativeName>
        <alternativeName>
            <fullName evidence="1">Inosinicase</fullName>
        </alternativeName>
    </domain>
</protein>
<comment type="catalytic activity">
    <reaction evidence="1">
        <text>(6R)-10-formyltetrahydrofolate + 5-amino-1-(5-phospho-beta-D-ribosyl)imidazole-4-carboxamide = 5-formamido-1-(5-phospho-D-ribosyl)imidazole-4-carboxamide + (6S)-5,6,7,8-tetrahydrofolate</text>
        <dbReference type="Rhea" id="RHEA:22192"/>
        <dbReference type="ChEBI" id="CHEBI:57453"/>
        <dbReference type="ChEBI" id="CHEBI:58467"/>
        <dbReference type="ChEBI" id="CHEBI:58475"/>
        <dbReference type="ChEBI" id="CHEBI:195366"/>
        <dbReference type="EC" id="2.1.2.3"/>
    </reaction>
</comment>
<comment type="catalytic activity">
    <reaction evidence="1">
        <text>IMP + H2O = 5-formamido-1-(5-phospho-D-ribosyl)imidazole-4-carboxamide</text>
        <dbReference type="Rhea" id="RHEA:18445"/>
        <dbReference type="ChEBI" id="CHEBI:15377"/>
        <dbReference type="ChEBI" id="CHEBI:58053"/>
        <dbReference type="ChEBI" id="CHEBI:58467"/>
        <dbReference type="EC" id="3.5.4.10"/>
    </reaction>
</comment>
<comment type="pathway">
    <text evidence="1">Purine metabolism; IMP biosynthesis via de novo pathway; 5-formamido-1-(5-phospho-D-ribosyl)imidazole-4-carboxamide from 5-amino-1-(5-phospho-D-ribosyl)imidazole-4-carboxamide (10-formyl THF route): step 1/1.</text>
</comment>
<comment type="pathway">
    <text evidence="1">Purine metabolism; IMP biosynthesis via de novo pathway; IMP from 5-formamido-1-(5-phospho-D-ribosyl)imidazole-4-carboxamide: step 1/1.</text>
</comment>
<comment type="domain">
    <text evidence="1">The IMP cyclohydrolase activity resides in the N-terminal region.</text>
</comment>
<comment type="similarity">
    <text evidence="1 3">Belongs to the PurH family.</text>
</comment>
<sequence length="452" mass="49867">MKRILVSLYEKEKYLDILRELHEKGWEIWASSGTAKFLKSNGIEANDVSTITGFENLLGGLVKTLHPEIFAGILGPEPRWDVVFVDLYPPPDIDIGGVALLRAAAKNWKKVKPAFDMETLKLAIEIDDEETRKYLAGMTFAFTSVYDSIRANQFVEGISLAFKREDLQLRYGENPHEKAFVYGKPAFEILHEGKTISFNNILDAENAWFMAKNLPRMGAVVVKHQSPCGAAIGEDKVEIVKKAIEADDESSFGGILAVNFEMDEEVAKSLKKYLEVIVAPSFTQEAIEVLSKKKVRLLKPGDYASWAGKMAFGSLVLSERKYPEGNFELVVGEPLSEKELEDLEFAYRVVEGAKSNAVLIAKDGVTVGIGSGQPSRKRAAWIATVMAGEKAKGAVAASDAFFPFPDSLEILAQAGVKAVVAPLGSIRDEEVIEKARELGITFYKAPSRVFRH</sequence>